<organism>
    <name type="scientific">Leishmania major</name>
    <dbReference type="NCBI Taxonomy" id="5664"/>
    <lineage>
        <taxon>Eukaryota</taxon>
        <taxon>Discoba</taxon>
        <taxon>Euglenozoa</taxon>
        <taxon>Kinetoplastea</taxon>
        <taxon>Metakinetoplastina</taxon>
        <taxon>Trypanosomatida</taxon>
        <taxon>Trypanosomatidae</taxon>
        <taxon>Leishmaniinae</taxon>
        <taxon>Leishmania</taxon>
    </lineage>
</organism>
<protein>
    <recommendedName>
        <fullName evidence="1">D-aminoacyl-tRNA deacylase 1</fullName>
        <ecNumber evidence="3">3.1.1.96</ecNumber>
    </recommendedName>
    <alternativeName>
        <fullName evidence="5">Gly-tRNA(Ala) deacylase 1</fullName>
    </alternativeName>
    <alternativeName>
        <fullName evidence="4">Gly-tRNA(Gly) deacylase 1</fullName>
    </alternativeName>
</protein>
<keyword id="KW-0963">Cytoplasm</keyword>
<keyword id="KW-0378">Hydrolase</keyword>
<keyword id="KW-1185">Reference proteome</keyword>
<keyword id="KW-0694">RNA-binding</keyword>
<keyword id="KW-0820">tRNA-binding</keyword>
<name>DTD1_LEIMA</name>
<reference key="1">
    <citation type="journal article" date="2005" name="Science">
        <title>The genome of the kinetoplastid parasite, Leishmania major.</title>
        <authorList>
            <person name="Ivens A.C."/>
            <person name="Peacock C.S."/>
            <person name="Worthey E.A."/>
            <person name="Murphy L."/>
            <person name="Aggarwal G."/>
            <person name="Berriman M."/>
            <person name="Sisk E."/>
            <person name="Rajandream M.A."/>
            <person name="Adlem E."/>
            <person name="Aert R."/>
            <person name="Anupama A."/>
            <person name="Apostolou Z."/>
            <person name="Attipoe P."/>
            <person name="Bason N."/>
            <person name="Bauser C."/>
            <person name="Beck A."/>
            <person name="Beverley S.M."/>
            <person name="Bianchettin G."/>
            <person name="Borzym K."/>
            <person name="Bothe G."/>
            <person name="Bruschi C.V."/>
            <person name="Collins M."/>
            <person name="Cadag E."/>
            <person name="Ciarloni L."/>
            <person name="Clayton C."/>
            <person name="Coulson R.M.R."/>
            <person name="Cronin A."/>
            <person name="Cruz A.K."/>
            <person name="Davies R.M."/>
            <person name="De Gaudenzi J."/>
            <person name="Dobson D.E."/>
            <person name="Duesterhoeft A."/>
            <person name="Fazelina G."/>
            <person name="Fosker N."/>
            <person name="Frasch A.C."/>
            <person name="Fraser A."/>
            <person name="Fuchs M."/>
            <person name="Gabel C."/>
            <person name="Goble A."/>
            <person name="Goffeau A."/>
            <person name="Harris D."/>
            <person name="Hertz-Fowler C."/>
            <person name="Hilbert H."/>
            <person name="Horn D."/>
            <person name="Huang Y."/>
            <person name="Klages S."/>
            <person name="Knights A."/>
            <person name="Kube M."/>
            <person name="Larke N."/>
            <person name="Litvin L."/>
            <person name="Lord A."/>
            <person name="Louie T."/>
            <person name="Marra M."/>
            <person name="Masuy D."/>
            <person name="Matthews K."/>
            <person name="Michaeli S."/>
            <person name="Mottram J.C."/>
            <person name="Mueller-Auer S."/>
            <person name="Munden H."/>
            <person name="Nelson S."/>
            <person name="Norbertczak H."/>
            <person name="Oliver K."/>
            <person name="O'neil S."/>
            <person name="Pentony M."/>
            <person name="Pohl T.M."/>
            <person name="Price C."/>
            <person name="Purnelle B."/>
            <person name="Quail M.A."/>
            <person name="Rabbinowitsch E."/>
            <person name="Reinhardt R."/>
            <person name="Rieger M."/>
            <person name="Rinta J."/>
            <person name="Robben J."/>
            <person name="Robertson L."/>
            <person name="Ruiz J.C."/>
            <person name="Rutter S."/>
            <person name="Saunders D."/>
            <person name="Schaefer M."/>
            <person name="Schein J."/>
            <person name="Schwartz D.C."/>
            <person name="Seeger K."/>
            <person name="Seyler A."/>
            <person name="Sharp S."/>
            <person name="Shin H."/>
            <person name="Sivam D."/>
            <person name="Squares R."/>
            <person name="Squares S."/>
            <person name="Tosato V."/>
            <person name="Vogt C."/>
            <person name="Volckaert G."/>
            <person name="Wambutt R."/>
            <person name="Warren T."/>
            <person name="Wedler H."/>
            <person name="Woodward J."/>
            <person name="Zhou S."/>
            <person name="Zimmermann W."/>
            <person name="Smith D.F."/>
            <person name="Blackwell J.M."/>
            <person name="Stuart K.D."/>
            <person name="Barrell B.G."/>
            <person name="Myler P.J."/>
        </authorList>
    </citation>
    <scope>NUCLEOTIDE SEQUENCE [LARGE SCALE GENOMIC DNA]</scope>
    <source>
        <strain>MHOM/IL/81/Friedlin</strain>
    </source>
</reference>
<reference key="2">
    <citation type="journal article" date="2011" name="Genome Res.">
        <title>Chromosome and gene copy number variation allow major structural change between species and strains of Leishmania.</title>
        <authorList>
            <person name="Rogers M.B."/>
            <person name="Hilley J.D."/>
            <person name="Dickens N.J."/>
            <person name="Wilkes J."/>
            <person name="Bates P.A."/>
            <person name="Depledge D.P."/>
            <person name="Harris D."/>
            <person name="Her Y."/>
            <person name="Herzyk P."/>
            <person name="Imamura H."/>
            <person name="Otto T.D."/>
            <person name="Sanders M."/>
            <person name="Seeger K."/>
            <person name="Dujardin J.C."/>
            <person name="Berriman M."/>
            <person name="Smith D.F."/>
            <person name="Hertz-Fowler C."/>
            <person name="Mottram J.C."/>
        </authorList>
    </citation>
    <scope>NUCLEOTIDE SEQUENCE [LARGE SCALE GENOMIC DNA]</scope>
    <source>
        <strain>MHOM/IL/81/Friedlin</strain>
    </source>
</reference>
<reference key="3">
    <citation type="journal article" date="2016" name="PLoS Biol.">
        <title>Elongation factor Tu prevents misediting of Gly-tRNA(Gly) caused by the design behind the chiral proofreading site of D-aminoacyl-tRNA deacylase.</title>
        <authorList>
            <person name="Routh S.B."/>
            <person name="Pawar K.I."/>
            <person name="Ahmad S."/>
            <person name="Singh S."/>
            <person name="Suma K."/>
            <person name="Kumar M."/>
            <person name="Kuncha S.K."/>
            <person name="Yadav K."/>
            <person name="Kruparani S.P."/>
            <person name="Sankaranarayanan R."/>
        </authorList>
    </citation>
    <scope>FUNCTION</scope>
    <scope>SUBSTRATE SPECIFICITY</scope>
</reference>
<reference key="4">
    <citation type="journal article" date="2017" name="Elife">
        <title>Role of D-aminoacyl-tRNA deacylase beyond chiral proofreading as a cellular defense against glycine mischarging by AlaRS.</title>
        <authorList>
            <person name="Pawar K.I."/>
            <person name="Suma K."/>
            <person name="Seenivasan A."/>
            <person name="Kuncha S.K."/>
            <person name="Routh S.B."/>
            <person name="Kruparani S.P."/>
            <person name="Sankaranarayanan R."/>
        </authorList>
    </citation>
    <scope>FUNCTION</scope>
    <scope>CATALYTIC ACTIVITY</scope>
</reference>
<comment type="function">
    <text evidence="1 2 3">An aminoacyl-tRNA editing enzyme that deacylates mischarged D-aminoacyl-tRNAs (By similarity). Hydrolyzes correctly charged, achiral, glycyl-tRNA(Gly) (PubMed:27224426). Deacylates mischarged D.melanogaster and E.coli glycyl-tRNA(Ala), protecting cells against glycine mischarging by AlaRS (PubMed:28362257). Acts via tRNA-based rather than protein-based catalysis; rejects L-amino acids rather than detecting D-amino acids in the active site. By recycling D-aminoacyl-tRNA to D-amino acids and free tRNA molecules, this enzyme counteracts the toxicity associated with the formation of D-aminoacyl-tRNA entities in vivo and helps enforce protein L-homochirality (By similarity).</text>
</comment>
<comment type="catalytic activity">
    <reaction evidence="3">
        <text>glycyl-tRNA(Ala) + H2O = tRNA(Ala) + glycine + H(+)</text>
        <dbReference type="Rhea" id="RHEA:53744"/>
        <dbReference type="Rhea" id="RHEA-COMP:9657"/>
        <dbReference type="Rhea" id="RHEA-COMP:13640"/>
        <dbReference type="ChEBI" id="CHEBI:15377"/>
        <dbReference type="ChEBI" id="CHEBI:15378"/>
        <dbReference type="ChEBI" id="CHEBI:57305"/>
        <dbReference type="ChEBI" id="CHEBI:78442"/>
        <dbReference type="ChEBI" id="CHEBI:78522"/>
        <dbReference type="EC" id="3.1.1.96"/>
    </reaction>
</comment>
<comment type="catalytic activity">
    <reaction evidence="3">
        <text>a D-aminoacyl-tRNA + H2O = a tRNA + a D-alpha-amino acid + H(+)</text>
        <dbReference type="Rhea" id="RHEA:13953"/>
        <dbReference type="Rhea" id="RHEA-COMP:10123"/>
        <dbReference type="Rhea" id="RHEA-COMP:10124"/>
        <dbReference type="ChEBI" id="CHEBI:15377"/>
        <dbReference type="ChEBI" id="CHEBI:15378"/>
        <dbReference type="ChEBI" id="CHEBI:59871"/>
        <dbReference type="ChEBI" id="CHEBI:78442"/>
        <dbReference type="ChEBI" id="CHEBI:79333"/>
        <dbReference type="EC" id="3.1.1.96"/>
    </reaction>
</comment>
<comment type="subunit">
    <text evidence="1">Homodimer.</text>
</comment>
<comment type="subcellular location">
    <subcellularLocation>
        <location evidence="1">Cytoplasm</location>
    </subcellularLocation>
</comment>
<comment type="domain">
    <text evidence="1">A Gly-cisPro motif from one monomer fits into the active site of the other monomer to allow specific chiral rejection of L-amino acids.</text>
</comment>
<comment type="similarity">
    <text evidence="6">Belongs to the DTD family.</text>
</comment>
<accession>Q4Q1E7</accession>
<evidence type="ECO:0000250" key="1">
    <source>
        <dbReference type="UniProtKB" id="Q8IIS0"/>
    </source>
</evidence>
<evidence type="ECO:0000269" key="2">
    <source>
    </source>
</evidence>
<evidence type="ECO:0000269" key="3">
    <source>
    </source>
</evidence>
<evidence type="ECO:0000303" key="4">
    <source>
    </source>
</evidence>
<evidence type="ECO:0000303" key="5">
    <source>
    </source>
</evidence>
<evidence type="ECO:0000305" key="6"/>
<evidence type="ECO:0000312" key="7">
    <source>
        <dbReference type="EMBL" id="CAJ09232.1"/>
    </source>
</evidence>
<dbReference type="EC" id="3.1.1.96" evidence="3"/>
<dbReference type="EMBL" id="FR796432">
    <property type="protein sequence ID" value="CAJ09232.1"/>
    <property type="molecule type" value="Genomic_DNA"/>
</dbReference>
<dbReference type="RefSeq" id="XP_001686851.1">
    <property type="nucleotide sequence ID" value="XM_001686799.1"/>
</dbReference>
<dbReference type="SMR" id="Q4Q1E7"/>
<dbReference type="FunCoup" id="Q4Q1E7">
    <property type="interactions" value="207"/>
</dbReference>
<dbReference type="STRING" id="5664.Q4Q1E7"/>
<dbReference type="EnsemblProtists" id="CAJ09232">
    <property type="protein sequence ID" value="CAJ09232"/>
    <property type="gene ID" value="LMJF_36_2730"/>
</dbReference>
<dbReference type="GeneID" id="5655562"/>
<dbReference type="KEGG" id="lma:LMJF_36_2730"/>
<dbReference type="VEuPathDB" id="TriTrypDB:LmjF.36.2730"/>
<dbReference type="VEuPathDB" id="TriTrypDB:LMJFC_360040000"/>
<dbReference type="VEuPathDB" id="TriTrypDB:LMJLV39_360036200"/>
<dbReference type="VEuPathDB" id="TriTrypDB:LMJSD75_360036100"/>
<dbReference type="eggNOG" id="KOG3323">
    <property type="taxonomic scope" value="Eukaryota"/>
</dbReference>
<dbReference type="HOGENOM" id="CLU_076901_0_4_1"/>
<dbReference type="InParanoid" id="Q4Q1E7"/>
<dbReference type="OMA" id="VFGADMK"/>
<dbReference type="Proteomes" id="UP000000542">
    <property type="component" value="Chromosome 36"/>
</dbReference>
<dbReference type="GO" id="GO:0005737">
    <property type="term" value="C:cytoplasm"/>
    <property type="evidence" value="ECO:0000266"/>
    <property type="project" value="GeneDB"/>
</dbReference>
<dbReference type="GO" id="GO:0051500">
    <property type="term" value="F:D-tyrosyl-tRNA(Tyr) deacylase activity"/>
    <property type="evidence" value="ECO:0000318"/>
    <property type="project" value="GO_Central"/>
</dbReference>
<dbReference type="GO" id="GO:0106026">
    <property type="term" value="F:Gly-tRNA(Ala) deacylase activity"/>
    <property type="evidence" value="ECO:0000314"/>
    <property type="project" value="UniProtKB"/>
</dbReference>
<dbReference type="GO" id="GO:0000049">
    <property type="term" value="F:tRNA binding"/>
    <property type="evidence" value="ECO:0007669"/>
    <property type="project" value="UniProtKB-KW"/>
</dbReference>
<dbReference type="GO" id="GO:0006399">
    <property type="term" value="P:tRNA metabolic process"/>
    <property type="evidence" value="ECO:0000318"/>
    <property type="project" value="GO_Central"/>
</dbReference>
<dbReference type="FunFam" id="3.50.80.10:FF:000001">
    <property type="entry name" value="D-aminoacyl-tRNA deacylase"/>
    <property type="match status" value="1"/>
</dbReference>
<dbReference type="Gene3D" id="3.50.80.10">
    <property type="entry name" value="D-tyrosyl-tRNA(Tyr) deacylase"/>
    <property type="match status" value="1"/>
</dbReference>
<dbReference type="InterPro" id="IPR003732">
    <property type="entry name" value="Daa-tRNA_deacyls_DTD"/>
</dbReference>
<dbReference type="InterPro" id="IPR023509">
    <property type="entry name" value="DTD-like_sf"/>
</dbReference>
<dbReference type="NCBIfam" id="TIGR00256">
    <property type="entry name" value="D-aminoacyl-tRNA deacylase"/>
    <property type="match status" value="1"/>
</dbReference>
<dbReference type="PANTHER" id="PTHR10472:SF5">
    <property type="entry name" value="D-AMINOACYL-TRNA DEACYLASE 1"/>
    <property type="match status" value="1"/>
</dbReference>
<dbReference type="PANTHER" id="PTHR10472">
    <property type="entry name" value="D-TYROSYL-TRNA TYR DEACYLASE"/>
    <property type="match status" value="1"/>
</dbReference>
<dbReference type="Pfam" id="PF02580">
    <property type="entry name" value="Tyr_Deacylase"/>
    <property type="match status" value="1"/>
</dbReference>
<dbReference type="SUPFAM" id="SSF69500">
    <property type="entry name" value="DTD-like"/>
    <property type="match status" value="1"/>
</dbReference>
<feature type="chain" id="PRO_0000441702" description="D-aminoacyl-tRNA deacylase 1">
    <location>
        <begin position="1"/>
        <end position="152"/>
    </location>
</feature>
<feature type="short sequence motif" description="Gly-cisPro motif, important for rejection of L-amino acids" evidence="1">
    <location>
        <begin position="140"/>
        <end position="141"/>
    </location>
</feature>
<gene>
    <name type="primary">dtd1</name>
    <name evidence="7" type="ORF">LMJF_36_2730</name>
</gene>
<proteinExistence type="evidence at protein level"/>
<sequence length="152" mass="16994">MKAVIQRVLSGSVTSEGEVVGSIQKGLAVLVGIARDDTADDTEYILRKILGVRVWSNEDGSKMWCRNVKEIDGEVLLISQFTLMHVMKGNKPDFHNAMPPEDALKVFNALRDKLRCEYAPHKIATGNFQHYMNIHLSNDGPVTLILDSKKRS</sequence>